<comment type="function">
    <text>Actins are highly conserved proteins that are involved in various types of cell motility and are ubiquitously expressed in all eukaryotic cells.</text>
</comment>
<comment type="catalytic activity">
    <reaction evidence="1">
        <text>ATP + H2O = ADP + phosphate + H(+)</text>
        <dbReference type="Rhea" id="RHEA:13065"/>
        <dbReference type="ChEBI" id="CHEBI:15377"/>
        <dbReference type="ChEBI" id="CHEBI:15378"/>
        <dbReference type="ChEBI" id="CHEBI:30616"/>
        <dbReference type="ChEBI" id="CHEBI:43474"/>
        <dbReference type="ChEBI" id="CHEBI:456216"/>
    </reaction>
</comment>
<comment type="subcellular location">
    <subcellularLocation>
        <location>Cytoplasm</location>
        <location>Cytoskeleton</location>
    </subcellularLocation>
</comment>
<comment type="similarity">
    <text evidence="2">Belongs to the actin family.</text>
</comment>
<evidence type="ECO:0000250" key="1">
    <source>
        <dbReference type="UniProtKB" id="P60010"/>
    </source>
</evidence>
<evidence type="ECO:0000305" key="2"/>
<keyword id="KW-0067">ATP-binding</keyword>
<keyword id="KW-0963">Cytoplasm</keyword>
<keyword id="KW-0206">Cytoskeleton</keyword>
<keyword id="KW-0378">Hydrolase</keyword>
<keyword id="KW-0547">Nucleotide-binding</keyword>
<keyword id="KW-1185">Reference proteome</keyword>
<organism>
    <name type="scientific">Kluyveromyces lactis (strain ATCC 8585 / CBS 2359 / DSM 70799 / NBRC 1267 / NRRL Y-1140 / WM37)</name>
    <name type="common">Yeast</name>
    <name type="synonym">Candida sphaerica</name>
    <dbReference type="NCBI Taxonomy" id="284590"/>
    <lineage>
        <taxon>Eukaryota</taxon>
        <taxon>Fungi</taxon>
        <taxon>Dikarya</taxon>
        <taxon>Ascomycota</taxon>
        <taxon>Saccharomycotina</taxon>
        <taxon>Saccharomycetes</taxon>
        <taxon>Saccharomycetales</taxon>
        <taxon>Saccharomycetaceae</taxon>
        <taxon>Kluyveromyces</taxon>
    </lineage>
</organism>
<sequence length="375" mass="41659">MDSEVAALVIDNGSGMCKAGFAGDDAPRAVFPSIVGRPRHQGIMVGMGQKDSYVGDEAQSKRGILTLRYPIEHGIVTNWDDMEKIWHHTFYNELRVAPEEHPVLLTEAPMNPKNNREKMTQILFETFNVPAFYVSIQAVLSLYSSGRTTGIVLDSGDGVTHVVPIYAGFSLPHAILRIDLAGRDITDYLMKILAERGYSFSTTAEREIVRDIKEKLCYVALDFEQEMQTASQSSAVEKSYELPDGQVITIGNERFRAPEALFHPSVLSLEAAGIDQTTYNSIMKCDVDVRKELYGNIVMSGGTTMFPGIAERMQKEITALAPSSMKVKIIAPPERKYSVWIGGSILASLTTFQQMWISKQEYDESGPSIVHLKCF</sequence>
<reference key="1">
    <citation type="journal article" date="1989" name="Mol. Cell. Biol.">
        <title>Kluyveromyces lactis maintains Saccharomyces cerevisiae intron-encoded splicing signals.</title>
        <authorList>
            <person name="Deshler J.O."/>
            <person name="Larson G.P."/>
            <person name="Rossi J.J."/>
        </authorList>
    </citation>
    <scope>NUCLEOTIDE SEQUENCE [GENOMIC DNA]</scope>
</reference>
<reference key="2">
    <citation type="journal article" date="2004" name="Nature">
        <title>Genome evolution in yeasts.</title>
        <authorList>
            <person name="Dujon B."/>
            <person name="Sherman D."/>
            <person name="Fischer G."/>
            <person name="Durrens P."/>
            <person name="Casaregola S."/>
            <person name="Lafontaine I."/>
            <person name="de Montigny J."/>
            <person name="Marck C."/>
            <person name="Neuveglise C."/>
            <person name="Talla E."/>
            <person name="Goffard N."/>
            <person name="Frangeul L."/>
            <person name="Aigle M."/>
            <person name="Anthouard V."/>
            <person name="Babour A."/>
            <person name="Barbe V."/>
            <person name="Barnay S."/>
            <person name="Blanchin S."/>
            <person name="Beckerich J.-M."/>
            <person name="Beyne E."/>
            <person name="Bleykasten C."/>
            <person name="Boisrame A."/>
            <person name="Boyer J."/>
            <person name="Cattolico L."/>
            <person name="Confanioleri F."/>
            <person name="de Daruvar A."/>
            <person name="Despons L."/>
            <person name="Fabre E."/>
            <person name="Fairhead C."/>
            <person name="Ferry-Dumazet H."/>
            <person name="Groppi A."/>
            <person name="Hantraye F."/>
            <person name="Hennequin C."/>
            <person name="Jauniaux N."/>
            <person name="Joyet P."/>
            <person name="Kachouri R."/>
            <person name="Kerrest A."/>
            <person name="Koszul R."/>
            <person name="Lemaire M."/>
            <person name="Lesur I."/>
            <person name="Ma L."/>
            <person name="Muller H."/>
            <person name="Nicaud J.-M."/>
            <person name="Nikolski M."/>
            <person name="Oztas S."/>
            <person name="Ozier-Kalogeropoulos O."/>
            <person name="Pellenz S."/>
            <person name="Potier S."/>
            <person name="Richard G.-F."/>
            <person name="Straub M.-L."/>
            <person name="Suleau A."/>
            <person name="Swennen D."/>
            <person name="Tekaia F."/>
            <person name="Wesolowski-Louvel M."/>
            <person name="Westhof E."/>
            <person name="Wirth B."/>
            <person name="Zeniou-Meyer M."/>
            <person name="Zivanovic Y."/>
            <person name="Bolotin-Fukuhara M."/>
            <person name="Thierry A."/>
            <person name="Bouchier C."/>
            <person name="Caudron B."/>
            <person name="Scarpelli C."/>
            <person name="Gaillardin C."/>
            <person name="Weissenbach J."/>
            <person name="Wincker P."/>
            <person name="Souciet J.-L."/>
        </authorList>
    </citation>
    <scope>NUCLEOTIDE SEQUENCE [LARGE SCALE GENOMIC DNA]</scope>
    <source>
        <strain>ATCC 8585 / CBS 2359 / DSM 70799 / NBRC 1267 / NRRL Y-1140 / WM37</strain>
    </source>
</reference>
<proteinExistence type="inferred from homology"/>
<accession>P17128</accession>
<accession>Q6CRZ0</accession>
<dbReference type="EC" id="3.6.4.-" evidence="1"/>
<dbReference type="EMBL" id="M25826">
    <property type="protein sequence ID" value="AAA35251.1"/>
    <property type="molecule type" value="Genomic_DNA"/>
</dbReference>
<dbReference type="EMBL" id="CR382124">
    <property type="protein sequence ID" value="CAH00395.1"/>
    <property type="molecule type" value="Genomic_DNA"/>
</dbReference>
<dbReference type="PIR" id="A32798">
    <property type="entry name" value="A32798"/>
</dbReference>
<dbReference type="RefSeq" id="XP_453299.1">
    <property type="nucleotide sequence ID" value="XM_453299.1"/>
</dbReference>
<dbReference type="SMR" id="P17128"/>
<dbReference type="FunCoup" id="P17128">
    <property type="interactions" value="1545"/>
</dbReference>
<dbReference type="STRING" id="284590.P17128"/>
<dbReference type="PaxDb" id="284590-P17128"/>
<dbReference type="KEGG" id="kla:KLLA0_D05357g"/>
<dbReference type="eggNOG" id="KOG0676">
    <property type="taxonomic scope" value="Eukaryota"/>
</dbReference>
<dbReference type="HOGENOM" id="CLU_027965_0_2_1"/>
<dbReference type="InParanoid" id="P17128"/>
<dbReference type="OMA" id="FHTTAER"/>
<dbReference type="Proteomes" id="UP000000598">
    <property type="component" value="Chromosome D"/>
</dbReference>
<dbReference type="GO" id="GO:0005737">
    <property type="term" value="C:cytoplasm"/>
    <property type="evidence" value="ECO:0007669"/>
    <property type="project" value="UniProtKB-KW"/>
</dbReference>
<dbReference type="GO" id="GO:0005856">
    <property type="term" value="C:cytoskeleton"/>
    <property type="evidence" value="ECO:0007669"/>
    <property type="project" value="UniProtKB-SubCell"/>
</dbReference>
<dbReference type="GO" id="GO:0005524">
    <property type="term" value="F:ATP binding"/>
    <property type="evidence" value="ECO:0007669"/>
    <property type="project" value="UniProtKB-KW"/>
</dbReference>
<dbReference type="GO" id="GO:0016787">
    <property type="term" value="F:hydrolase activity"/>
    <property type="evidence" value="ECO:0007669"/>
    <property type="project" value="UniProtKB-KW"/>
</dbReference>
<dbReference type="CDD" id="cd10224">
    <property type="entry name" value="ASKHA_NBD_actin"/>
    <property type="match status" value="1"/>
</dbReference>
<dbReference type="FunFam" id="3.30.420.40:FF:000148">
    <property type="entry name" value="Actin, alpha skeletal muscle"/>
    <property type="match status" value="1"/>
</dbReference>
<dbReference type="FunFam" id="3.90.640.10:FF:000001">
    <property type="entry name" value="Actin, muscle"/>
    <property type="match status" value="1"/>
</dbReference>
<dbReference type="FunFam" id="3.30.420.40:FF:000404">
    <property type="entry name" value="Major actin"/>
    <property type="match status" value="1"/>
</dbReference>
<dbReference type="FunFam" id="3.30.420.40:FF:000058">
    <property type="entry name" value="Putative actin-related protein 5"/>
    <property type="match status" value="1"/>
</dbReference>
<dbReference type="Gene3D" id="3.30.420.40">
    <property type="match status" value="2"/>
</dbReference>
<dbReference type="Gene3D" id="3.90.640.10">
    <property type="entry name" value="Actin, Chain A, domain 4"/>
    <property type="match status" value="1"/>
</dbReference>
<dbReference type="InterPro" id="IPR004000">
    <property type="entry name" value="Actin"/>
</dbReference>
<dbReference type="InterPro" id="IPR020902">
    <property type="entry name" value="Actin/actin-like_CS"/>
</dbReference>
<dbReference type="InterPro" id="IPR004001">
    <property type="entry name" value="Actin_CS"/>
</dbReference>
<dbReference type="InterPro" id="IPR043129">
    <property type="entry name" value="ATPase_NBD"/>
</dbReference>
<dbReference type="PANTHER" id="PTHR11937">
    <property type="entry name" value="ACTIN"/>
    <property type="match status" value="1"/>
</dbReference>
<dbReference type="Pfam" id="PF00022">
    <property type="entry name" value="Actin"/>
    <property type="match status" value="1"/>
</dbReference>
<dbReference type="PRINTS" id="PR00190">
    <property type="entry name" value="ACTIN"/>
</dbReference>
<dbReference type="SMART" id="SM00268">
    <property type="entry name" value="ACTIN"/>
    <property type="match status" value="1"/>
</dbReference>
<dbReference type="SUPFAM" id="SSF53067">
    <property type="entry name" value="Actin-like ATPase domain"/>
    <property type="match status" value="2"/>
</dbReference>
<dbReference type="PROSITE" id="PS00406">
    <property type="entry name" value="ACTINS_1"/>
    <property type="match status" value="1"/>
</dbReference>
<dbReference type="PROSITE" id="PS00432">
    <property type="entry name" value="ACTINS_2"/>
    <property type="match status" value="1"/>
</dbReference>
<dbReference type="PROSITE" id="PS01132">
    <property type="entry name" value="ACTINS_ACT_LIKE"/>
    <property type="match status" value="1"/>
</dbReference>
<name>ACT_KLULA</name>
<feature type="chain" id="PRO_0000088951" description="Actin">
    <location>
        <begin position="1"/>
        <end position="375"/>
    </location>
</feature>
<feature type="sequence conflict" description="In Ref. 1; AAA35251." evidence="2" ref="1">
    <original>P</original>
    <variation>S</variation>
    <location>
        <position position="109"/>
    </location>
</feature>
<protein>
    <recommendedName>
        <fullName>Actin</fullName>
        <ecNumber evidence="1">3.6.4.-</ecNumber>
    </recommendedName>
</protein>
<gene>
    <name type="primary">ACT</name>
    <name type="ordered locus">KLLA0D05357g</name>
</gene>